<proteinExistence type="evidence at protein level"/>
<organism>
    <name type="scientific">Aspergillus fumigatus (strain CBS 144.89 / FGSC A1163 / CEA10)</name>
    <name type="common">Neosartorya fumigata</name>
    <dbReference type="NCBI Taxonomy" id="451804"/>
    <lineage>
        <taxon>Eukaryota</taxon>
        <taxon>Fungi</taxon>
        <taxon>Dikarya</taxon>
        <taxon>Ascomycota</taxon>
        <taxon>Pezizomycotina</taxon>
        <taxon>Eurotiomycetes</taxon>
        <taxon>Eurotiomycetidae</taxon>
        <taxon>Eurotiales</taxon>
        <taxon>Aspergillaceae</taxon>
        <taxon>Aspergillus</taxon>
        <taxon>Aspergillus subgen. Fumigati</taxon>
    </lineage>
</organism>
<comment type="function">
    <text>Catalyzes the release of fatty acids from lysophospholipids.</text>
</comment>
<comment type="catalytic activity">
    <reaction>
        <text>a 1-acyl-sn-glycero-3-phosphocholine + H2O = sn-glycerol 3-phosphocholine + a fatty acid + H(+)</text>
        <dbReference type="Rhea" id="RHEA:15177"/>
        <dbReference type="ChEBI" id="CHEBI:15377"/>
        <dbReference type="ChEBI" id="CHEBI:15378"/>
        <dbReference type="ChEBI" id="CHEBI:16870"/>
        <dbReference type="ChEBI" id="CHEBI:28868"/>
        <dbReference type="ChEBI" id="CHEBI:58168"/>
        <dbReference type="EC" id="3.1.1.5"/>
    </reaction>
</comment>
<comment type="subcellular location">
    <subcellularLocation>
        <location>Cell membrane</location>
        <topology>Lipid-anchor</topology>
        <topology>GPI-anchor</topology>
    </subcellularLocation>
</comment>
<comment type="induction">
    <text evidence="3">Strongly induced by lecithin.</text>
</comment>
<comment type="PTM">
    <text>The GPI-like anchor contains a phosphoceramide lipid group.</text>
</comment>
<comment type="similarity">
    <text evidence="4">Belongs to the lysophospholipase family.</text>
</comment>
<dbReference type="EC" id="3.1.1.5"/>
<dbReference type="EMBL" id="AY376593">
    <property type="protein sequence ID" value="AAQ85123.1"/>
    <property type="molecule type" value="mRNA"/>
</dbReference>
<dbReference type="EMBL" id="DS499596">
    <property type="protein sequence ID" value="EDP52290.1"/>
    <property type="molecule type" value="Genomic_DNA"/>
</dbReference>
<dbReference type="SMR" id="B0XZV8"/>
<dbReference type="Allergome" id="8988">
    <property type="allergen name" value="Asp f LPL3"/>
</dbReference>
<dbReference type="GlyCosmos" id="B0XZV8">
    <property type="glycosylation" value="15 sites, No reported glycans"/>
</dbReference>
<dbReference type="EnsemblFungi" id="EDP52290">
    <property type="protein sequence ID" value="EDP52290"/>
    <property type="gene ID" value="AFUB_034540"/>
</dbReference>
<dbReference type="VEuPathDB" id="FungiDB:AFUB_034540"/>
<dbReference type="HOGENOM" id="CLU_014602_0_0_1"/>
<dbReference type="OrthoDB" id="28285at5052"/>
<dbReference type="PhylomeDB" id="B0XZV8"/>
<dbReference type="BRENDA" id="3.1.1.5">
    <property type="organism ID" value="508"/>
</dbReference>
<dbReference type="Proteomes" id="UP000001699">
    <property type="component" value="Unassembled WGS sequence"/>
</dbReference>
<dbReference type="GO" id="GO:0005829">
    <property type="term" value="C:cytosol"/>
    <property type="evidence" value="ECO:0007669"/>
    <property type="project" value="TreeGrafter"/>
</dbReference>
<dbReference type="GO" id="GO:0005783">
    <property type="term" value="C:endoplasmic reticulum"/>
    <property type="evidence" value="ECO:0007669"/>
    <property type="project" value="TreeGrafter"/>
</dbReference>
<dbReference type="GO" id="GO:0005886">
    <property type="term" value="C:plasma membrane"/>
    <property type="evidence" value="ECO:0007669"/>
    <property type="project" value="UniProtKB-SubCell"/>
</dbReference>
<dbReference type="GO" id="GO:0098552">
    <property type="term" value="C:side of membrane"/>
    <property type="evidence" value="ECO:0007669"/>
    <property type="project" value="UniProtKB-KW"/>
</dbReference>
<dbReference type="GO" id="GO:0004622">
    <property type="term" value="F:lysophospholipase activity"/>
    <property type="evidence" value="ECO:0007669"/>
    <property type="project" value="UniProtKB-EC"/>
</dbReference>
<dbReference type="GO" id="GO:0004623">
    <property type="term" value="F:phospholipase A2 activity"/>
    <property type="evidence" value="ECO:0007669"/>
    <property type="project" value="TreeGrafter"/>
</dbReference>
<dbReference type="GO" id="GO:0046475">
    <property type="term" value="P:glycerophospholipid catabolic process"/>
    <property type="evidence" value="ECO:0007669"/>
    <property type="project" value="TreeGrafter"/>
</dbReference>
<dbReference type="CDD" id="cd07203">
    <property type="entry name" value="cPLA2_Fungal_PLB"/>
    <property type="match status" value="1"/>
</dbReference>
<dbReference type="FunFam" id="3.40.1090.10:FF:000010">
    <property type="entry name" value="Lysophospholipase"/>
    <property type="match status" value="1"/>
</dbReference>
<dbReference type="Gene3D" id="3.40.1090.10">
    <property type="entry name" value="Cytosolic phospholipase A2 catalytic domain"/>
    <property type="match status" value="1"/>
</dbReference>
<dbReference type="InterPro" id="IPR016035">
    <property type="entry name" value="Acyl_Trfase/lysoPLipase"/>
</dbReference>
<dbReference type="InterPro" id="IPR002642">
    <property type="entry name" value="LysoPLipase_cat_dom"/>
</dbReference>
<dbReference type="PANTHER" id="PTHR10728">
    <property type="entry name" value="CYTOSOLIC PHOSPHOLIPASE A2"/>
    <property type="match status" value="1"/>
</dbReference>
<dbReference type="PANTHER" id="PTHR10728:SF33">
    <property type="entry name" value="LYSOPHOSPHOLIPASE 1-RELATED"/>
    <property type="match status" value="1"/>
</dbReference>
<dbReference type="Pfam" id="PF01735">
    <property type="entry name" value="PLA2_B"/>
    <property type="match status" value="1"/>
</dbReference>
<dbReference type="SMART" id="SM00022">
    <property type="entry name" value="PLAc"/>
    <property type="match status" value="1"/>
</dbReference>
<dbReference type="SUPFAM" id="SSF52151">
    <property type="entry name" value="FabD/lysophospholipase-like"/>
    <property type="match status" value="1"/>
</dbReference>
<dbReference type="PROSITE" id="PS51210">
    <property type="entry name" value="PLA2C"/>
    <property type="match status" value="1"/>
</dbReference>
<sequence length="630" mass="67417">MKALLSLLTAVAVATATPLDLSLRALPNAPDGYTPAKVSCPATRPSIRGAGSLSPNETSWLEIRRKNTVQPMTDLLGRLNLGFDAAGYIDRVSSNASNLPNIAIAVSGGGYRALTNGAGAIKAFDSRTQGSTQSGHLGGLLQSATYVSGLSGGGWLVGSVYLNNFTTIADLQSGDHGNVWQFSTSILEGPKAKHLQFLSTADYWKDLLKAVDGKSDAGFNTSLTDYWGRALSYQFINDRTGNGGLSYTWSSIALTDPFRRGEMPLPILVADGRNPGELLIGSNSTVYEFNPWEFGSFDPSIFGFAPLEYLGSRFDNGQLPRGEPCVRGFDNAGFVMGTSSSLFNQFILRLNKTDLPDLAKDVFSKILTAIGRDGDDIAVYGPNPFYGYRNSTAAYSRSRELDVVDGGEDGQNIPLHPLIQPVRHVDVIFAVDSSADGPYSWPNGSALVATYERSLNSSGIGNGTVFPAVPDVNTFVNLGLNTRPTFFGCDPANLSAPAPLVVYLPNAPYSTHSNTSTFQLAYSDSERDEIITNGYNVVTRGNATVDKSWPSCVGCAILQRSMYRTNTSMPAVCNSCFKEYCWNGTVDSKTPRTYEPTLLLGSTSTNAAYTQGVTWLVGILAVGVAMGMTA</sequence>
<name>PLB3_ASPFC</name>
<gene>
    <name type="primary">plb3</name>
    <name type="ORF">AFUB_034540</name>
</gene>
<keyword id="KW-1003">Cell membrane</keyword>
<keyword id="KW-0325">Glycoprotein</keyword>
<keyword id="KW-0336">GPI-anchor</keyword>
<keyword id="KW-0378">Hydrolase</keyword>
<keyword id="KW-0442">Lipid degradation</keyword>
<keyword id="KW-0443">Lipid metabolism</keyword>
<keyword id="KW-0449">Lipoprotein</keyword>
<keyword id="KW-0472">Membrane</keyword>
<keyword id="KW-0732">Signal</keyword>
<reference key="1">
    <citation type="journal article" date="2004" name="FEMS Microbiol. Lett.">
        <title>Characterisation and expression of phospholipases B from the opportunistic fungus Aspergillus fumigatus.</title>
        <authorList>
            <person name="Shen D.-K."/>
            <person name="Noodeh A.D."/>
            <person name="Kazemi A."/>
            <person name="Grillot R."/>
            <person name="Robson G.D."/>
            <person name="Brugere J.-F."/>
        </authorList>
    </citation>
    <scope>NUCLEOTIDE SEQUENCE [MRNA]</scope>
    <scope>INDUCTION</scope>
</reference>
<reference key="2">
    <citation type="journal article" date="2008" name="PLoS Genet.">
        <title>Genomic islands in the pathogenic filamentous fungus Aspergillus fumigatus.</title>
        <authorList>
            <person name="Fedorova N.D."/>
            <person name="Khaldi N."/>
            <person name="Joardar V.S."/>
            <person name="Maiti R."/>
            <person name="Amedeo P."/>
            <person name="Anderson M.J."/>
            <person name="Crabtree J."/>
            <person name="Silva J.C."/>
            <person name="Badger J.H."/>
            <person name="Albarraq A."/>
            <person name="Angiuoli S."/>
            <person name="Bussey H."/>
            <person name="Bowyer P."/>
            <person name="Cotty P.J."/>
            <person name="Dyer P.S."/>
            <person name="Egan A."/>
            <person name="Galens K."/>
            <person name="Fraser-Liggett C.M."/>
            <person name="Haas B.J."/>
            <person name="Inman J.M."/>
            <person name="Kent R."/>
            <person name="Lemieux S."/>
            <person name="Malavazi I."/>
            <person name="Orvis J."/>
            <person name="Roemer T."/>
            <person name="Ronning C.M."/>
            <person name="Sundaram J.P."/>
            <person name="Sutton G."/>
            <person name="Turner G."/>
            <person name="Venter J.C."/>
            <person name="White O.R."/>
            <person name="Whitty B.R."/>
            <person name="Youngman P."/>
            <person name="Wolfe K.H."/>
            <person name="Goldman G.H."/>
            <person name="Wortman J.R."/>
            <person name="Jiang B."/>
            <person name="Denning D.W."/>
            <person name="Nierman W.C."/>
        </authorList>
    </citation>
    <scope>NUCLEOTIDE SEQUENCE [LARGE SCALE GENOMIC DNA]</scope>
    <source>
        <strain>CBS 144.89 / FGSC A1163 / CEA10</strain>
    </source>
</reference>
<reference key="3">
    <citation type="journal article" date="2003" name="Glycobiology">
        <title>Structures of the glycosylphosphatidylinositol membrane anchors from Aspergillus fumigatus membrane proteins.</title>
        <authorList>
            <person name="Fontaine T."/>
            <person name="Magnin T."/>
            <person name="Melhert A."/>
            <person name="Lamont D."/>
            <person name="Latge J.-P."/>
            <person name="Ferguson M.A.J."/>
        </authorList>
    </citation>
    <scope>STRUCTURE OF GPI-ANCHOR</scope>
</reference>
<protein>
    <recommendedName>
        <fullName>Lysophospholipase 3</fullName>
        <ecNumber>3.1.1.5</ecNumber>
    </recommendedName>
    <alternativeName>
        <fullName>Phospholipase B 3</fullName>
    </alternativeName>
</protein>
<accession>B0XZV8</accession>
<accession>Q4WYY4</accession>
<accession>Q6U819</accession>
<evidence type="ECO:0000255" key="1"/>
<evidence type="ECO:0000255" key="2">
    <source>
        <dbReference type="PROSITE-ProRule" id="PRU00555"/>
    </source>
</evidence>
<evidence type="ECO:0000269" key="3">
    <source>
    </source>
</evidence>
<evidence type="ECO:0000305" key="4"/>
<feature type="signal peptide" evidence="1">
    <location>
        <begin position="1"/>
        <end position="16"/>
    </location>
</feature>
<feature type="chain" id="PRO_0000372613" description="Lysophospholipase 3">
    <location>
        <begin position="17"/>
        <end position="606"/>
    </location>
</feature>
<feature type="propeptide" id="PRO_0000372614" description="Removed in mature form" evidence="1">
    <location>
        <begin position="607"/>
        <end position="630"/>
    </location>
</feature>
<feature type="domain" description="PLA2c" evidence="2">
    <location>
        <begin position="39"/>
        <end position="587"/>
    </location>
</feature>
<feature type="lipid moiety-binding region" description="GPI-like-anchor amidated asparagine" evidence="1">
    <location>
        <position position="606"/>
    </location>
</feature>
<feature type="glycosylation site" description="N-linked (GlcNAc...) asparagine" evidence="1">
    <location>
        <position position="56"/>
    </location>
</feature>
<feature type="glycosylation site" description="N-linked (GlcNAc...) asparagine" evidence="1">
    <location>
        <position position="95"/>
    </location>
</feature>
<feature type="glycosylation site" description="N-linked (GlcNAc...) asparagine" evidence="1">
    <location>
        <position position="164"/>
    </location>
</feature>
<feature type="glycosylation site" description="N-linked (GlcNAc...) asparagine" evidence="1">
    <location>
        <position position="220"/>
    </location>
</feature>
<feature type="glycosylation site" description="N-linked (GlcNAc...) asparagine" evidence="1">
    <location>
        <position position="283"/>
    </location>
</feature>
<feature type="glycosylation site" description="N-linked (GlcNAc...) asparagine" evidence="1">
    <location>
        <position position="351"/>
    </location>
</feature>
<feature type="glycosylation site" description="N-linked (GlcNAc...) asparagine" evidence="1">
    <location>
        <position position="390"/>
    </location>
</feature>
<feature type="glycosylation site" description="N-linked (GlcNAc...) asparagine" evidence="1">
    <location>
        <position position="443"/>
    </location>
</feature>
<feature type="glycosylation site" description="N-linked (GlcNAc...) asparagine" evidence="1">
    <location>
        <position position="456"/>
    </location>
</feature>
<feature type="glycosylation site" description="N-linked (GlcNAc...) asparagine" evidence="1">
    <location>
        <position position="462"/>
    </location>
</feature>
<feature type="glycosylation site" description="N-linked (GlcNAc...) asparagine" evidence="1">
    <location>
        <position position="493"/>
    </location>
</feature>
<feature type="glycosylation site" description="N-linked (GlcNAc...) asparagine" evidence="1">
    <location>
        <position position="514"/>
    </location>
</feature>
<feature type="glycosylation site" description="N-linked (GlcNAc...) asparagine" evidence="1">
    <location>
        <position position="542"/>
    </location>
</feature>
<feature type="glycosylation site" description="N-linked (GlcNAc...) asparagine" evidence="1">
    <location>
        <position position="566"/>
    </location>
</feature>
<feature type="glycosylation site" description="N-linked (GlcNAc...) asparagine" evidence="1">
    <location>
        <position position="583"/>
    </location>
</feature>
<feature type="sequence conflict" description="In Ref. 1; AAQ85123." evidence="4" ref="1">
    <original>Q</original>
    <variation>E</variation>
    <location>
        <position position="70"/>
    </location>
</feature>
<feature type="sequence conflict" description="In Ref. 1; AAQ85123." evidence="4" ref="1">
    <original>N</original>
    <variation>D</variation>
    <location>
        <position position="542"/>
    </location>
</feature>
<feature type="sequence conflict" description="In Ref. 1; AAQ85123." evidence="4" ref="1">
    <original>G</original>
    <variation>S</variation>
    <location>
        <position position="618"/>
    </location>
</feature>